<gene>
    <name evidence="1" type="primary">tilS</name>
    <name type="ordered locus">A1I_07755</name>
</gene>
<comment type="function">
    <text evidence="1">Ligates lysine onto the cytidine present at position 34 of the AUA codon-specific tRNA(Ile) that contains the anticodon CAU, in an ATP-dependent manner. Cytidine is converted to lysidine, thus changing the amino acid specificity of the tRNA from methionine to isoleucine.</text>
</comment>
<comment type="catalytic activity">
    <reaction evidence="1">
        <text>cytidine(34) in tRNA(Ile2) + L-lysine + ATP = lysidine(34) in tRNA(Ile2) + AMP + diphosphate + H(+)</text>
        <dbReference type="Rhea" id="RHEA:43744"/>
        <dbReference type="Rhea" id="RHEA-COMP:10625"/>
        <dbReference type="Rhea" id="RHEA-COMP:10670"/>
        <dbReference type="ChEBI" id="CHEBI:15378"/>
        <dbReference type="ChEBI" id="CHEBI:30616"/>
        <dbReference type="ChEBI" id="CHEBI:32551"/>
        <dbReference type="ChEBI" id="CHEBI:33019"/>
        <dbReference type="ChEBI" id="CHEBI:82748"/>
        <dbReference type="ChEBI" id="CHEBI:83665"/>
        <dbReference type="ChEBI" id="CHEBI:456215"/>
        <dbReference type="EC" id="6.3.4.19"/>
    </reaction>
</comment>
<comment type="subcellular location">
    <subcellularLocation>
        <location evidence="1">Cytoplasm</location>
    </subcellularLocation>
</comment>
<comment type="domain">
    <text>The N-terminal region contains the highly conserved SGGXDS motif, predicted to be a P-loop motif involved in ATP binding.</text>
</comment>
<comment type="similarity">
    <text evidence="1">Belongs to the tRNA(Ile)-lysidine synthase family.</text>
</comment>
<accession>A8GY99</accession>
<name>TILS_RICB8</name>
<dbReference type="EC" id="6.3.4.19" evidence="1"/>
<dbReference type="EMBL" id="CP000849">
    <property type="protein sequence ID" value="ABV79849.1"/>
    <property type="molecule type" value="Genomic_DNA"/>
</dbReference>
<dbReference type="RefSeq" id="WP_012152298.1">
    <property type="nucleotide sequence ID" value="NC_009883.1"/>
</dbReference>
<dbReference type="SMR" id="A8GY99"/>
<dbReference type="KEGG" id="rbo:A1I_07755"/>
<dbReference type="HOGENOM" id="CLU_018869_3_2_5"/>
<dbReference type="GO" id="GO:0005737">
    <property type="term" value="C:cytoplasm"/>
    <property type="evidence" value="ECO:0007669"/>
    <property type="project" value="UniProtKB-SubCell"/>
</dbReference>
<dbReference type="GO" id="GO:0005524">
    <property type="term" value="F:ATP binding"/>
    <property type="evidence" value="ECO:0007669"/>
    <property type="project" value="UniProtKB-UniRule"/>
</dbReference>
<dbReference type="GO" id="GO:0032267">
    <property type="term" value="F:tRNA(Ile)-lysidine synthase activity"/>
    <property type="evidence" value="ECO:0007669"/>
    <property type="project" value="UniProtKB-EC"/>
</dbReference>
<dbReference type="GO" id="GO:0006400">
    <property type="term" value="P:tRNA modification"/>
    <property type="evidence" value="ECO:0007669"/>
    <property type="project" value="UniProtKB-UniRule"/>
</dbReference>
<dbReference type="CDD" id="cd01992">
    <property type="entry name" value="TilS_N"/>
    <property type="match status" value="1"/>
</dbReference>
<dbReference type="Gene3D" id="3.40.50.620">
    <property type="entry name" value="HUPs"/>
    <property type="match status" value="1"/>
</dbReference>
<dbReference type="HAMAP" id="MF_01161">
    <property type="entry name" value="tRNA_Ile_lys_synt"/>
    <property type="match status" value="1"/>
</dbReference>
<dbReference type="InterPro" id="IPR014729">
    <property type="entry name" value="Rossmann-like_a/b/a_fold"/>
</dbReference>
<dbReference type="InterPro" id="IPR011063">
    <property type="entry name" value="TilS/TtcA_N"/>
</dbReference>
<dbReference type="InterPro" id="IPR012094">
    <property type="entry name" value="tRNA_Ile_lys_synt"/>
</dbReference>
<dbReference type="InterPro" id="IPR012795">
    <property type="entry name" value="tRNA_Ile_lys_synt_N"/>
</dbReference>
<dbReference type="NCBIfam" id="TIGR02432">
    <property type="entry name" value="lysidine_TilS_N"/>
    <property type="match status" value="1"/>
</dbReference>
<dbReference type="PANTHER" id="PTHR43033">
    <property type="entry name" value="TRNA(ILE)-LYSIDINE SYNTHASE-RELATED"/>
    <property type="match status" value="1"/>
</dbReference>
<dbReference type="PANTHER" id="PTHR43033:SF1">
    <property type="entry name" value="TRNA(ILE)-LYSIDINE SYNTHASE-RELATED"/>
    <property type="match status" value="1"/>
</dbReference>
<dbReference type="Pfam" id="PF01171">
    <property type="entry name" value="ATP_bind_3"/>
    <property type="match status" value="1"/>
</dbReference>
<dbReference type="SUPFAM" id="SSF52402">
    <property type="entry name" value="Adenine nucleotide alpha hydrolases-like"/>
    <property type="match status" value="1"/>
</dbReference>
<keyword id="KW-0067">ATP-binding</keyword>
<keyword id="KW-0963">Cytoplasm</keyword>
<keyword id="KW-0436">Ligase</keyword>
<keyword id="KW-0547">Nucleotide-binding</keyword>
<keyword id="KW-0819">tRNA processing</keyword>
<protein>
    <recommendedName>
        <fullName evidence="1">tRNA(Ile)-lysidine synthase</fullName>
        <ecNumber evidence="1">6.3.4.19</ecNumber>
    </recommendedName>
    <alternativeName>
        <fullName evidence="1">tRNA(Ile)-2-lysyl-cytidine synthase</fullName>
    </alternativeName>
    <alternativeName>
        <fullName evidence="1">tRNA(Ile)-lysidine synthetase</fullName>
    </alternativeName>
</protein>
<sequence length="430" mass="50074">MLYEKFEHNINNLIGGFGLSKIAIAVSGGSDSVALLYLANIWAKKNNIELFVLSVDHNLRDQSKQEIEYIQNTANDLGLKFYSLFFDHQNNFSNLQERARKGRYDLMTSLCQKLDILVLLTAHHEDDYIENFCLRLERKSGVFGLSSSSVNWHNNTQIIRPLFNIPKSELVNYLATNNIKWFEDQSNLSTKYRRNTIRQKLAKEEVYIKDDIITQQIKVNELIENKFKPELISAIAESVKISEYGFAFLDLIKFSGFSQEVRVQLINFLLIIISGQQRSARFYSVEPILKLIRQSLDFKNTLHGCVIKRMQNKLLIYREFGKKLPESKLLLDKQLVWDNRFRITKNHDIENCVATYLSLEDYKIIKEKLDLEVLKNLSCGNHNAILFTLPIVKILEKVVAIPHISYYDNDIKSFNVSFAPDFTSRFTHFY</sequence>
<proteinExistence type="inferred from homology"/>
<evidence type="ECO:0000255" key="1">
    <source>
        <dbReference type="HAMAP-Rule" id="MF_01161"/>
    </source>
</evidence>
<feature type="chain" id="PRO_1000065624" description="tRNA(Ile)-lysidine synthase">
    <location>
        <begin position="1"/>
        <end position="430"/>
    </location>
</feature>
<feature type="binding site" evidence="1">
    <location>
        <begin position="27"/>
        <end position="32"/>
    </location>
    <ligand>
        <name>ATP</name>
        <dbReference type="ChEBI" id="CHEBI:30616"/>
    </ligand>
</feature>
<reference key="1">
    <citation type="submission" date="2007-09" db="EMBL/GenBank/DDBJ databases">
        <title>Complete genome sequencing of Rickettsia bellii.</title>
        <authorList>
            <person name="Madan A."/>
            <person name="Lee H."/>
            <person name="Madan A."/>
            <person name="Yoon J.-G."/>
            <person name="Ryu G.-Y."/>
            <person name="Dasch G."/>
            <person name="Ereemeva M."/>
        </authorList>
    </citation>
    <scope>NUCLEOTIDE SEQUENCE [LARGE SCALE GENOMIC DNA]</scope>
    <source>
        <strain>OSU 85-389</strain>
    </source>
</reference>
<organism>
    <name type="scientific">Rickettsia bellii (strain OSU 85-389)</name>
    <dbReference type="NCBI Taxonomy" id="391896"/>
    <lineage>
        <taxon>Bacteria</taxon>
        <taxon>Pseudomonadati</taxon>
        <taxon>Pseudomonadota</taxon>
        <taxon>Alphaproteobacteria</taxon>
        <taxon>Rickettsiales</taxon>
        <taxon>Rickettsiaceae</taxon>
        <taxon>Rickettsieae</taxon>
        <taxon>Rickettsia</taxon>
        <taxon>belli group</taxon>
    </lineage>
</organism>